<proteinExistence type="inferred from homology"/>
<feature type="chain" id="PRO_0000230374" description="Small ribosomal subunit protein uS5">
    <location>
        <begin position="1"/>
        <end position="164"/>
    </location>
</feature>
<feature type="domain" description="S5 DRBM" evidence="1">
    <location>
        <begin position="10"/>
        <end position="73"/>
    </location>
</feature>
<name>RS5_STRA1</name>
<keyword id="KW-0687">Ribonucleoprotein</keyword>
<keyword id="KW-0689">Ribosomal protein</keyword>
<keyword id="KW-0694">RNA-binding</keyword>
<keyword id="KW-0699">rRNA-binding</keyword>
<organism>
    <name type="scientific">Streptococcus agalactiae serotype Ia (strain ATCC 27591 / A909 / CDC SS700)</name>
    <dbReference type="NCBI Taxonomy" id="205921"/>
    <lineage>
        <taxon>Bacteria</taxon>
        <taxon>Bacillati</taxon>
        <taxon>Bacillota</taxon>
        <taxon>Bacilli</taxon>
        <taxon>Lactobacillales</taxon>
        <taxon>Streptococcaceae</taxon>
        <taxon>Streptococcus</taxon>
    </lineage>
</organism>
<accession>Q3K3V2</accession>
<comment type="function">
    <text evidence="1">With S4 and S12 plays an important role in translational accuracy.</text>
</comment>
<comment type="function">
    <text evidence="1">Located at the back of the 30S subunit body where it stabilizes the conformation of the head with respect to the body.</text>
</comment>
<comment type="subunit">
    <text evidence="1">Part of the 30S ribosomal subunit. Contacts proteins S4 and S8.</text>
</comment>
<comment type="domain">
    <text>The N-terminal domain interacts with the head of the 30S subunit; the C-terminal domain interacts with the body and contacts protein S4. The interaction surface between S4 and S5 is involved in control of translational fidelity.</text>
</comment>
<comment type="similarity">
    <text evidence="1">Belongs to the universal ribosomal protein uS5 family.</text>
</comment>
<evidence type="ECO:0000255" key="1">
    <source>
        <dbReference type="HAMAP-Rule" id="MF_01307"/>
    </source>
</evidence>
<evidence type="ECO:0000305" key="2"/>
<sequence length="164" mass="17091">MAFKDNAVELEERVVAINRVTKVVKGGRRLRFAALVVVGDRNGRVGFGTGKAQEVPEAIRKAVEAAKKNMVEVPMVGTTIPHEVRSEFGGAKVLLKPAVEGAGVAAGGAVRAVIELAGVADITSKSLGSNTPINIVRATVEGLKQLKRAEEVAALRGISVSDLA</sequence>
<dbReference type="EMBL" id="CP000114">
    <property type="protein sequence ID" value="ABA44621.1"/>
    <property type="molecule type" value="Genomic_DNA"/>
</dbReference>
<dbReference type="RefSeq" id="WP_000874200.1">
    <property type="nucleotide sequence ID" value="NC_007432.1"/>
</dbReference>
<dbReference type="SMR" id="Q3K3V2"/>
<dbReference type="GeneID" id="66885035"/>
<dbReference type="KEGG" id="sak:SAK_0108"/>
<dbReference type="HOGENOM" id="CLU_065898_2_2_9"/>
<dbReference type="GO" id="GO:0015935">
    <property type="term" value="C:small ribosomal subunit"/>
    <property type="evidence" value="ECO:0007669"/>
    <property type="project" value="InterPro"/>
</dbReference>
<dbReference type="GO" id="GO:0019843">
    <property type="term" value="F:rRNA binding"/>
    <property type="evidence" value="ECO:0007669"/>
    <property type="project" value="UniProtKB-UniRule"/>
</dbReference>
<dbReference type="GO" id="GO:0003735">
    <property type="term" value="F:structural constituent of ribosome"/>
    <property type="evidence" value="ECO:0007669"/>
    <property type="project" value="InterPro"/>
</dbReference>
<dbReference type="GO" id="GO:0006412">
    <property type="term" value="P:translation"/>
    <property type="evidence" value="ECO:0007669"/>
    <property type="project" value="UniProtKB-UniRule"/>
</dbReference>
<dbReference type="FunFam" id="3.30.160.20:FF:000001">
    <property type="entry name" value="30S ribosomal protein S5"/>
    <property type="match status" value="1"/>
</dbReference>
<dbReference type="FunFam" id="3.30.230.10:FF:000002">
    <property type="entry name" value="30S ribosomal protein S5"/>
    <property type="match status" value="1"/>
</dbReference>
<dbReference type="Gene3D" id="3.30.160.20">
    <property type="match status" value="1"/>
</dbReference>
<dbReference type="Gene3D" id="3.30.230.10">
    <property type="match status" value="1"/>
</dbReference>
<dbReference type="HAMAP" id="MF_01307_B">
    <property type="entry name" value="Ribosomal_uS5_B"/>
    <property type="match status" value="1"/>
</dbReference>
<dbReference type="InterPro" id="IPR020568">
    <property type="entry name" value="Ribosomal_Su5_D2-typ_SF"/>
</dbReference>
<dbReference type="InterPro" id="IPR000851">
    <property type="entry name" value="Ribosomal_uS5"/>
</dbReference>
<dbReference type="InterPro" id="IPR005712">
    <property type="entry name" value="Ribosomal_uS5_bac-type"/>
</dbReference>
<dbReference type="InterPro" id="IPR005324">
    <property type="entry name" value="Ribosomal_uS5_C"/>
</dbReference>
<dbReference type="InterPro" id="IPR013810">
    <property type="entry name" value="Ribosomal_uS5_N"/>
</dbReference>
<dbReference type="InterPro" id="IPR018192">
    <property type="entry name" value="Ribosomal_uS5_N_CS"/>
</dbReference>
<dbReference type="InterPro" id="IPR014721">
    <property type="entry name" value="Ribsml_uS5_D2-typ_fold_subgr"/>
</dbReference>
<dbReference type="NCBIfam" id="TIGR01021">
    <property type="entry name" value="rpsE_bact"/>
    <property type="match status" value="1"/>
</dbReference>
<dbReference type="PANTHER" id="PTHR48277">
    <property type="entry name" value="MITOCHONDRIAL RIBOSOMAL PROTEIN S5"/>
    <property type="match status" value="1"/>
</dbReference>
<dbReference type="PANTHER" id="PTHR48277:SF1">
    <property type="entry name" value="MITOCHONDRIAL RIBOSOMAL PROTEIN S5"/>
    <property type="match status" value="1"/>
</dbReference>
<dbReference type="Pfam" id="PF00333">
    <property type="entry name" value="Ribosomal_S5"/>
    <property type="match status" value="1"/>
</dbReference>
<dbReference type="Pfam" id="PF03719">
    <property type="entry name" value="Ribosomal_S5_C"/>
    <property type="match status" value="1"/>
</dbReference>
<dbReference type="SUPFAM" id="SSF54768">
    <property type="entry name" value="dsRNA-binding domain-like"/>
    <property type="match status" value="1"/>
</dbReference>
<dbReference type="SUPFAM" id="SSF54211">
    <property type="entry name" value="Ribosomal protein S5 domain 2-like"/>
    <property type="match status" value="1"/>
</dbReference>
<dbReference type="PROSITE" id="PS00585">
    <property type="entry name" value="RIBOSOMAL_S5"/>
    <property type="match status" value="1"/>
</dbReference>
<dbReference type="PROSITE" id="PS50881">
    <property type="entry name" value="S5_DSRBD"/>
    <property type="match status" value="1"/>
</dbReference>
<gene>
    <name evidence="1" type="primary">rpsE</name>
    <name type="ordered locus">SAK_0108</name>
</gene>
<reference key="1">
    <citation type="journal article" date="2005" name="Proc. Natl. Acad. Sci. U.S.A.">
        <title>Genome analysis of multiple pathogenic isolates of Streptococcus agalactiae: implications for the microbial 'pan-genome'.</title>
        <authorList>
            <person name="Tettelin H."/>
            <person name="Masignani V."/>
            <person name="Cieslewicz M.J."/>
            <person name="Donati C."/>
            <person name="Medini D."/>
            <person name="Ward N.L."/>
            <person name="Angiuoli S.V."/>
            <person name="Crabtree J."/>
            <person name="Jones A.L."/>
            <person name="Durkin A.S."/>
            <person name="DeBoy R.T."/>
            <person name="Davidsen T.M."/>
            <person name="Mora M."/>
            <person name="Scarselli M."/>
            <person name="Margarit y Ros I."/>
            <person name="Peterson J.D."/>
            <person name="Hauser C.R."/>
            <person name="Sundaram J.P."/>
            <person name="Nelson W.C."/>
            <person name="Madupu R."/>
            <person name="Brinkac L.M."/>
            <person name="Dodson R.J."/>
            <person name="Rosovitz M.J."/>
            <person name="Sullivan S.A."/>
            <person name="Daugherty S.C."/>
            <person name="Haft D.H."/>
            <person name="Selengut J."/>
            <person name="Gwinn M.L."/>
            <person name="Zhou L."/>
            <person name="Zafar N."/>
            <person name="Khouri H."/>
            <person name="Radune D."/>
            <person name="Dimitrov G."/>
            <person name="Watkins K."/>
            <person name="O'Connor K.J."/>
            <person name="Smith S."/>
            <person name="Utterback T.R."/>
            <person name="White O."/>
            <person name="Rubens C.E."/>
            <person name="Grandi G."/>
            <person name="Madoff L.C."/>
            <person name="Kasper D.L."/>
            <person name="Telford J.L."/>
            <person name="Wessels M.R."/>
            <person name="Rappuoli R."/>
            <person name="Fraser C.M."/>
        </authorList>
    </citation>
    <scope>NUCLEOTIDE SEQUENCE [LARGE SCALE GENOMIC DNA]</scope>
    <source>
        <strain>ATCC 27591 / A909 / CDC SS700</strain>
    </source>
</reference>
<protein>
    <recommendedName>
        <fullName evidence="1">Small ribosomal subunit protein uS5</fullName>
    </recommendedName>
    <alternativeName>
        <fullName evidence="2">30S ribosomal protein S5</fullName>
    </alternativeName>
</protein>